<organism>
    <name type="scientific">Listeria welshimeri serovar 6b (strain ATCC 35897 / DSM 20650 / CCUG 15529 / CIP 8149 / NCTC 11857 / SLCC 5334 / V8)</name>
    <dbReference type="NCBI Taxonomy" id="386043"/>
    <lineage>
        <taxon>Bacteria</taxon>
        <taxon>Bacillati</taxon>
        <taxon>Bacillota</taxon>
        <taxon>Bacilli</taxon>
        <taxon>Bacillales</taxon>
        <taxon>Listeriaceae</taxon>
        <taxon>Listeria</taxon>
    </lineage>
</organism>
<keyword id="KW-0687">Ribonucleoprotein</keyword>
<keyword id="KW-0689">Ribosomal protein</keyword>
<protein>
    <recommendedName>
        <fullName evidence="1">Small ribosomal subunit protein bS21</fullName>
    </recommendedName>
    <alternativeName>
        <fullName evidence="3">30S ribosomal protein S21</fullName>
    </alternativeName>
</protein>
<feature type="chain" id="PRO_1000005134" description="Small ribosomal subunit protein bS21">
    <location>
        <begin position="1"/>
        <end position="57"/>
    </location>
</feature>
<feature type="region of interest" description="Disordered" evidence="2">
    <location>
        <begin position="24"/>
        <end position="57"/>
    </location>
</feature>
<feature type="compositionally biased region" description="Basic and acidic residues" evidence="2">
    <location>
        <begin position="31"/>
        <end position="42"/>
    </location>
</feature>
<feature type="compositionally biased region" description="Basic residues" evidence="2">
    <location>
        <begin position="43"/>
        <end position="57"/>
    </location>
</feature>
<gene>
    <name evidence="1" type="primary">rpsU</name>
    <name type="ordered locus">lwe1484</name>
</gene>
<evidence type="ECO:0000255" key="1">
    <source>
        <dbReference type="HAMAP-Rule" id="MF_00358"/>
    </source>
</evidence>
<evidence type="ECO:0000256" key="2">
    <source>
        <dbReference type="SAM" id="MobiDB-lite"/>
    </source>
</evidence>
<evidence type="ECO:0000305" key="3"/>
<sequence>MSKTVVRKNESLEDALRRFKRTVSKSGTLQESRKREFYEKPSVKRKKKSEAARKRKF</sequence>
<dbReference type="EMBL" id="AM263198">
    <property type="protein sequence ID" value="CAK20902.1"/>
    <property type="molecule type" value="Genomic_DNA"/>
</dbReference>
<dbReference type="RefSeq" id="WP_003719762.1">
    <property type="nucleotide sequence ID" value="NC_008555.1"/>
</dbReference>
<dbReference type="SMR" id="A0AIS0"/>
<dbReference type="STRING" id="386043.lwe1484"/>
<dbReference type="GeneID" id="93239346"/>
<dbReference type="KEGG" id="lwe:lwe1484"/>
<dbReference type="eggNOG" id="COG0828">
    <property type="taxonomic scope" value="Bacteria"/>
</dbReference>
<dbReference type="HOGENOM" id="CLU_159258_3_2_9"/>
<dbReference type="OrthoDB" id="9799244at2"/>
<dbReference type="Proteomes" id="UP000000779">
    <property type="component" value="Chromosome"/>
</dbReference>
<dbReference type="GO" id="GO:1990904">
    <property type="term" value="C:ribonucleoprotein complex"/>
    <property type="evidence" value="ECO:0007669"/>
    <property type="project" value="UniProtKB-KW"/>
</dbReference>
<dbReference type="GO" id="GO:0005840">
    <property type="term" value="C:ribosome"/>
    <property type="evidence" value="ECO:0007669"/>
    <property type="project" value="UniProtKB-KW"/>
</dbReference>
<dbReference type="GO" id="GO:0003735">
    <property type="term" value="F:structural constituent of ribosome"/>
    <property type="evidence" value="ECO:0007669"/>
    <property type="project" value="InterPro"/>
</dbReference>
<dbReference type="GO" id="GO:0006412">
    <property type="term" value="P:translation"/>
    <property type="evidence" value="ECO:0007669"/>
    <property type="project" value="UniProtKB-UniRule"/>
</dbReference>
<dbReference type="Gene3D" id="1.20.5.1150">
    <property type="entry name" value="Ribosomal protein S8"/>
    <property type="match status" value="1"/>
</dbReference>
<dbReference type="HAMAP" id="MF_00358">
    <property type="entry name" value="Ribosomal_bS21"/>
    <property type="match status" value="1"/>
</dbReference>
<dbReference type="InterPro" id="IPR001911">
    <property type="entry name" value="Ribosomal_bS21"/>
</dbReference>
<dbReference type="InterPro" id="IPR018278">
    <property type="entry name" value="Ribosomal_bS21_CS"/>
</dbReference>
<dbReference type="InterPro" id="IPR038380">
    <property type="entry name" value="Ribosomal_bS21_sf"/>
</dbReference>
<dbReference type="NCBIfam" id="TIGR00030">
    <property type="entry name" value="S21p"/>
    <property type="match status" value="1"/>
</dbReference>
<dbReference type="PANTHER" id="PTHR21109">
    <property type="entry name" value="MITOCHONDRIAL 28S RIBOSOMAL PROTEIN S21"/>
    <property type="match status" value="1"/>
</dbReference>
<dbReference type="PANTHER" id="PTHR21109:SF22">
    <property type="entry name" value="SMALL RIBOSOMAL SUBUNIT PROTEIN BS21"/>
    <property type="match status" value="1"/>
</dbReference>
<dbReference type="Pfam" id="PF01165">
    <property type="entry name" value="Ribosomal_S21"/>
    <property type="match status" value="1"/>
</dbReference>
<dbReference type="PRINTS" id="PR00976">
    <property type="entry name" value="RIBOSOMALS21"/>
</dbReference>
<dbReference type="PROSITE" id="PS01181">
    <property type="entry name" value="RIBOSOMAL_S21"/>
    <property type="match status" value="1"/>
</dbReference>
<comment type="similarity">
    <text evidence="1">Belongs to the bacterial ribosomal protein bS21 family.</text>
</comment>
<accession>A0AIS0</accession>
<proteinExistence type="inferred from homology"/>
<name>RS21_LISW6</name>
<reference key="1">
    <citation type="journal article" date="2006" name="J. Bacteriol.">
        <title>Whole-genome sequence of Listeria welshimeri reveals common steps in genome reduction with Listeria innocua as compared to Listeria monocytogenes.</title>
        <authorList>
            <person name="Hain T."/>
            <person name="Steinweg C."/>
            <person name="Kuenne C.T."/>
            <person name="Billion A."/>
            <person name="Ghai R."/>
            <person name="Chatterjee S.S."/>
            <person name="Domann E."/>
            <person name="Kaerst U."/>
            <person name="Goesmann A."/>
            <person name="Bekel T."/>
            <person name="Bartels D."/>
            <person name="Kaiser O."/>
            <person name="Meyer F."/>
            <person name="Puehler A."/>
            <person name="Weisshaar B."/>
            <person name="Wehland J."/>
            <person name="Liang C."/>
            <person name="Dandekar T."/>
            <person name="Lampidis R."/>
            <person name="Kreft J."/>
            <person name="Goebel W."/>
            <person name="Chakraborty T."/>
        </authorList>
    </citation>
    <scope>NUCLEOTIDE SEQUENCE [LARGE SCALE GENOMIC DNA]</scope>
    <source>
        <strain>ATCC 35897 / DSM 20650 / CCUG 15529 / CIP 8149 / NCTC 11857 / SLCC 5334 / V8</strain>
    </source>
</reference>